<keyword id="KW-0997">Cell inner membrane</keyword>
<keyword id="KW-1003">Cell membrane</keyword>
<keyword id="KW-0441">Lipid A biosynthesis</keyword>
<keyword id="KW-0444">Lipid biosynthesis</keyword>
<keyword id="KW-0443">Lipid metabolism</keyword>
<keyword id="KW-0448">Lipopolysaccharide biosynthesis</keyword>
<keyword id="KW-0472">Membrane</keyword>
<keyword id="KW-0812">Transmembrane</keyword>
<keyword id="KW-1133">Transmembrane helix</keyword>
<keyword id="KW-0813">Transport</keyword>
<evidence type="ECO:0000255" key="1"/>
<evidence type="ECO:0000255" key="2">
    <source>
        <dbReference type="HAMAP-Rule" id="MF_01869"/>
    </source>
</evidence>
<gene>
    <name evidence="2" type="primary">arnE</name>
    <name type="ordered locus">ECED1_2725</name>
</gene>
<organism>
    <name type="scientific">Escherichia coli O81 (strain ED1a)</name>
    <dbReference type="NCBI Taxonomy" id="585397"/>
    <lineage>
        <taxon>Bacteria</taxon>
        <taxon>Pseudomonadati</taxon>
        <taxon>Pseudomonadota</taxon>
        <taxon>Gammaproteobacteria</taxon>
        <taxon>Enterobacterales</taxon>
        <taxon>Enterobacteriaceae</taxon>
        <taxon>Escherichia</taxon>
    </lineage>
</organism>
<proteinExistence type="inferred from homology"/>
<accession>B7MXU0</accession>
<name>ARNE_ECO81</name>
<comment type="function">
    <text evidence="2">Translocates 4-amino-4-deoxy-L-arabinose-phosphoundecaprenol (alpha-L-Ara4N-phosphoundecaprenol) from the cytoplasmic to the periplasmic side of the inner membrane.</text>
</comment>
<comment type="pathway">
    <text evidence="2">Bacterial outer membrane biogenesis; lipopolysaccharide biosynthesis.</text>
</comment>
<comment type="subunit">
    <text evidence="2">Heterodimer of ArnE and ArnF.</text>
</comment>
<comment type="subcellular location">
    <subcellularLocation>
        <location evidence="2">Cell inner membrane</location>
        <topology evidence="2">Multi-pass membrane protein</topology>
    </subcellularLocation>
</comment>
<comment type="similarity">
    <text evidence="2">Belongs to the ArnE family.</text>
</comment>
<sequence>MIWLTLVFASLLSVAGQLCQKQATCFAAVNKRRKHIVLWLGLALACLGLAMVLWLLVLQNVPVGIAYPMLSLNFVWVTLAAVKLWHEPVSLRHWCGLAFIIGGIVILGSTV</sequence>
<protein>
    <recommendedName>
        <fullName evidence="2">Probable 4-amino-4-deoxy-L-arabinose-phosphoundecaprenol flippase subunit ArnE</fullName>
        <shortName evidence="2">L-Ara4N-phosphoundecaprenol flippase subunit ArnE</shortName>
    </recommendedName>
    <alternativeName>
        <fullName evidence="2">Undecaprenyl phosphate-aminoarabinose flippase subunit ArnE</fullName>
    </alternativeName>
</protein>
<dbReference type="EMBL" id="CU928162">
    <property type="protein sequence ID" value="CAR08906.2"/>
    <property type="molecule type" value="Genomic_DNA"/>
</dbReference>
<dbReference type="RefSeq" id="WP_000638015.1">
    <property type="nucleotide sequence ID" value="NC_011745.1"/>
</dbReference>
<dbReference type="SMR" id="B7MXU0"/>
<dbReference type="KEGG" id="ecq:ECED1_2725"/>
<dbReference type="HOGENOM" id="CLU_131462_5_1_6"/>
<dbReference type="UniPathway" id="UPA00030"/>
<dbReference type="Proteomes" id="UP000000748">
    <property type="component" value="Chromosome"/>
</dbReference>
<dbReference type="GO" id="GO:0005886">
    <property type="term" value="C:plasma membrane"/>
    <property type="evidence" value="ECO:0007669"/>
    <property type="project" value="UniProtKB-SubCell"/>
</dbReference>
<dbReference type="GO" id="GO:1901505">
    <property type="term" value="F:carbohydrate derivative transmembrane transporter activity"/>
    <property type="evidence" value="ECO:0007669"/>
    <property type="project" value="InterPro"/>
</dbReference>
<dbReference type="GO" id="GO:0009245">
    <property type="term" value="P:lipid A biosynthetic process"/>
    <property type="evidence" value="ECO:0007669"/>
    <property type="project" value="UniProtKB-UniRule"/>
</dbReference>
<dbReference type="GO" id="GO:0009103">
    <property type="term" value="P:lipopolysaccharide biosynthetic process"/>
    <property type="evidence" value="ECO:0007669"/>
    <property type="project" value="UniProtKB-UniRule"/>
</dbReference>
<dbReference type="FunFam" id="1.10.3730.20:FF:000002">
    <property type="entry name" value="Probable 4-amino-4-deoxy-L-arabinose-phosphoundecaprenol flippase subunit ArnE"/>
    <property type="match status" value="1"/>
</dbReference>
<dbReference type="Gene3D" id="1.10.3730.20">
    <property type="match status" value="1"/>
</dbReference>
<dbReference type="HAMAP" id="MF_01869">
    <property type="entry name" value="Flippase_ArnE"/>
    <property type="match status" value="1"/>
</dbReference>
<dbReference type="InterPro" id="IPR000620">
    <property type="entry name" value="EamA_dom"/>
</dbReference>
<dbReference type="InterPro" id="IPR022883">
    <property type="entry name" value="Flippase_ArnE"/>
</dbReference>
<dbReference type="InterPro" id="IPR000390">
    <property type="entry name" value="Small_drug/metabolite_transptr"/>
</dbReference>
<dbReference type="NCBIfam" id="NF011625">
    <property type="entry name" value="PRK15051.1"/>
    <property type="match status" value="1"/>
</dbReference>
<dbReference type="PANTHER" id="PTHR30561:SF23">
    <property type="entry name" value="4-AMINO-4-DEOXY-L-ARABINOSE-PHOSPHOUNDECAPRENOL FLIPPASE SUBUNIT ARNE-RELATED"/>
    <property type="match status" value="1"/>
</dbReference>
<dbReference type="PANTHER" id="PTHR30561">
    <property type="entry name" value="SMR FAMILY PROTON-DEPENDENT DRUG EFFLUX TRANSPORTER SUGE"/>
    <property type="match status" value="1"/>
</dbReference>
<dbReference type="Pfam" id="PF00892">
    <property type="entry name" value="EamA"/>
    <property type="match status" value="1"/>
</dbReference>
<dbReference type="SUPFAM" id="SSF103481">
    <property type="entry name" value="Multidrug resistance efflux transporter EmrE"/>
    <property type="match status" value="1"/>
</dbReference>
<feature type="chain" id="PRO_0000382973" description="Probable 4-amino-4-deoxy-L-arabinose-phosphoundecaprenol flippase subunit ArnE">
    <location>
        <begin position="1"/>
        <end position="111"/>
    </location>
</feature>
<feature type="topological domain" description="Cytoplasmic" evidence="1">
    <location>
        <begin position="1"/>
        <end position="35"/>
    </location>
</feature>
<feature type="transmembrane region" description="Helical" evidence="2">
    <location>
        <begin position="36"/>
        <end position="56"/>
    </location>
</feature>
<feature type="topological domain" description="Periplasmic" evidence="1">
    <location>
        <begin position="57"/>
        <end position="60"/>
    </location>
</feature>
<feature type="transmembrane region" description="Helical" evidence="2">
    <location>
        <begin position="61"/>
        <end position="81"/>
    </location>
</feature>
<feature type="topological domain" description="Cytoplasmic" evidence="1">
    <location>
        <begin position="82"/>
        <end position="87"/>
    </location>
</feature>
<feature type="transmembrane region" description="Helical" evidence="2">
    <location>
        <begin position="88"/>
        <end position="108"/>
    </location>
</feature>
<feature type="topological domain" description="Periplasmic" evidence="1">
    <location>
        <begin position="109"/>
        <end position="111"/>
    </location>
</feature>
<feature type="domain" description="EamA" evidence="2">
    <location>
        <begin position="40"/>
        <end position="109"/>
    </location>
</feature>
<reference key="1">
    <citation type="journal article" date="2009" name="PLoS Genet.">
        <title>Organised genome dynamics in the Escherichia coli species results in highly diverse adaptive paths.</title>
        <authorList>
            <person name="Touchon M."/>
            <person name="Hoede C."/>
            <person name="Tenaillon O."/>
            <person name="Barbe V."/>
            <person name="Baeriswyl S."/>
            <person name="Bidet P."/>
            <person name="Bingen E."/>
            <person name="Bonacorsi S."/>
            <person name="Bouchier C."/>
            <person name="Bouvet O."/>
            <person name="Calteau A."/>
            <person name="Chiapello H."/>
            <person name="Clermont O."/>
            <person name="Cruveiller S."/>
            <person name="Danchin A."/>
            <person name="Diard M."/>
            <person name="Dossat C."/>
            <person name="Karoui M.E."/>
            <person name="Frapy E."/>
            <person name="Garry L."/>
            <person name="Ghigo J.M."/>
            <person name="Gilles A.M."/>
            <person name="Johnson J."/>
            <person name="Le Bouguenec C."/>
            <person name="Lescat M."/>
            <person name="Mangenot S."/>
            <person name="Martinez-Jehanne V."/>
            <person name="Matic I."/>
            <person name="Nassif X."/>
            <person name="Oztas S."/>
            <person name="Petit M.A."/>
            <person name="Pichon C."/>
            <person name="Rouy Z."/>
            <person name="Ruf C.S."/>
            <person name="Schneider D."/>
            <person name="Tourret J."/>
            <person name="Vacherie B."/>
            <person name="Vallenet D."/>
            <person name="Medigue C."/>
            <person name="Rocha E.P.C."/>
            <person name="Denamur E."/>
        </authorList>
    </citation>
    <scope>NUCLEOTIDE SEQUENCE [LARGE SCALE GENOMIC DNA]</scope>
    <source>
        <strain>ED1a</strain>
    </source>
</reference>